<organism>
    <name type="scientific">Porphyromonas gingivalis (strain ATCC 33277 / DSM 20709 / CIP 103683 / JCM 12257 / NCTC 11834 / 2561)</name>
    <dbReference type="NCBI Taxonomy" id="431947"/>
    <lineage>
        <taxon>Bacteria</taxon>
        <taxon>Pseudomonadati</taxon>
        <taxon>Bacteroidota</taxon>
        <taxon>Bacteroidia</taxon>
        <taxon>Bacteroidales</taxon>
        <taxon>Porphyromonadaceae</taxon>
        <taxon>Porphyromonas</taxon>
    </lineage>
</organism>
<evidence type="ECO:0000255" key="1">
    <source>
        <dbReference type="HAMAP-Rule" id="MF_00080"/>
    </source>
</evidence>
<evidence type="ECO:0000256" key="2">
    <source>
        <dbReference type="SAM" id="MobiDB-lite"/>
    </source>
</evidence>
<sequence>MAIDKTKNQHRINEAIRVKEVRLVGDNVEQGVYNIQEARRIAESQDLDLVEISPNADPPVCRVTDYQKFVYQLKKKAKEQKAKSVKIVIKEIRFGPQTDDHDYNFKLKHAKEFLQEGSKVKAYVFFRGRSILFKEQGEVLLLRFANDLEDFARVEQMPILEGKRMTIMLTPKSASKKGHTPPKTQVEASKQANESAETEEEKKRCHPTKPVL</sequence>
<dbReference type="EMBL" id="AP009380">
    <property type="protein sequence ID" value="BAG33482.1"/>
    <property type="molecule type" value="Genomic_DNA"/>
</dbReference>
<dbReference type="RefSeq" id="WP_012457917.1">
    <property type="nucleotide sequence ID" value="NC_010729.1"/>
</dbReference>
<dbReference type="SMR" id="B2RJD7"/>
<dbReference type="GeneID" id="29256175"/>
<dbReference type="KEGG" id="pgn:PGN_0963"/>
<dbReference type="eggNOG" id="COG0290">
    <property type="taxonomic scope" value="Bacteria"/>
</dbReference>
<dbReference type="HOGENOM" id="CLU_054919_3_0_10"/>
<dbReference type="OrthoDB" id="9806014at2"/>
<dbReference type="BioCyc" id="PGIN431947:G1G2V-1082-MONOMER"/>
<dbReference type="Proteomes" id="UP000008842">
    <property type="component" value="Chromosome"/>
</dbReference>
<dbReference type="GO" id="GO:0005829">
    <property type="term" value="C:cytosol"/>
    <property type="evidence" value="ECO:0007669"/>
    <property type="project" value="TreeGrafter"/>
</dbReference>
<dbReference type="GO" id="GO:0016020">
    <property type="term" value="C:membrane"/>
    <property type="evidence" value="ECO:0007669"/>
    <property type="project" value="TreeGrafter"/>
</dbReference>
<dbReference type="GO" id="GO:0043022">
    <property type="term" value="F:ribosome binding"/>
    <property type="evidence" value="ECO:0007669"/>
    <property type="project" value="TreeGrafter"/>
</dbReference>
<dbReference type="GO" id="GO:0003743">
    <property type="term" value="F:translation initiation factor activity"/>
    <property type="evidence" value="ECO:0007669"/>
    <property type="project" value="UniProtKB-UniRule"/>
</dbReference>
<dbReference type="GO" id="GO:0032790">
    <property type="term" value="P:ribosome disassembly"/>
    <property type="evidence" value="ECO:0007669"/>
    <property type="project" value="TreeGrafter"/>
</dbReference>
<dbReference type="FunFam" id="3.10.20.80:FF:000001">
    <property type="entry name" value="Translation initiation factor IF-3"/>
    <property type="match status" value="1"/>
</dbReference>
<dbReference type="FunFam" id="3.30.110.10:FF:000001">
    <property type="entry name" value="Translation initiation factor IF-3"/>
    <property type="match status" value="1"/>
</dbReference>
<dbReference type="Gene3D" id="3.30.110.10">
    <property type="entry name" value="Translation initiation factor 3 (IF-3), C-terminal domain"/>
    <property type="match status" value="1"/>
</dbReference>
<dbReference type="Gene3D" id="3.10.20.80">
    <property type="entry name" value="Translation initiation factor 3 (IF-3), N-terminal domain"/>
    <property type="match status" value="1"/>
</dbReference>
<dbReference type="HAMAP" id="MF_00080">
    <property type="entry name" value="IF_3"/>
    <property type="match status" value="1"/>
</dbReference>
<dbReference type="InterPro" id="IPR036788">
    <property type="entry name" value="T_IF-3_C_sf"/>
</dbReference>
<dbReference type="InterPro" id="IPR036787">
    <property type="entry name" value="T_IF-3_N_sf"/>
</dbReference>
<dbReference type="InterPro" id="IPR001288">
    <property type="entry name" value="Translation_initiation_fac_3"/>
</dbReference>
<dbReference type="InterPro" id="IPR019815">
    <property type="entry name" value="Translation_initiation_fac_3_C"/>
</dbReference>
<dbReference type="InterPro" id="IPR019814">
    <property type="entry name" value="Translation_initiation_fac_3_N"/>
</dbReference>
<dbReference type="NCBIfam" id="TIGR00168">
    <property type="entry name" value="infC"/>
    <property type="match status" value="1"/>
</dbReference>
<dbReference type="PANTHER" id="PTHR10938">
    <property type="entry name" value="TRANSLATION INITIATION FACTOR IF-3"/>
    <property type="match status" value="1"/>
</dbReference>
<dbReference type="PANTHER" id="PTHR10938:SF0">
    <property type="entry name" value="TRANSLATION INITIATION FACTOR IF-3, MITOCHONDRIAL"/>
    <property type="match status" value="1"/>
</dbReference>
<dbReference type="Pfam" id="PF00707">
    <property type="entry name" value="IF3_C"/>
    <property type="match status" value="1"/>
</dbReference>
<dbReference type="Pfam" id="PF05198">
    <property type="entry name" value="IF3_N"/>
    <property type="match status" value="1"/>
</dbReference>
<dbReference type="SUPFAM" id="SSF55200">
    <property type="entry name" value="Translation initiation factor IF3, C-terminal domain"/>
    <property type="match status" value="1"/>
</dbReference>
<dbReference type="SUPFAM" id="SSF54364">
    <property type="entry name" value="Translation initiation factor IF3, N-terminal domain"/>
    <property type="match status" value="1"/>
</dbReference>
<name>IF3_PORG3</name>
<feature type="chain" id="PRO_1000092779" description="Translation initiation factor IF-3">
    <location>
        <begin position="1"/>
        <end position="212"/>
    </location>
</feature>
<feature type="region of interest" description="Disordered" evidence="2">
    <location>
        <begin position="171"/>
        <end position="212"/>
    </location>
</feature>
<feature type="compositionally biased region" description="Polar residues" evidence="2">
    <location>
        <begin position="182"/>
        <end position="195"/>
    </location>
</feature>
<proteinExistence type="inferred from homology"/>
<protein>
    <recommendedName>
        <fullName evidence="1">Translation initiation factor IF-3</fullName>
    </recommendedName>
</protein>
<reference key="1">
    <citation type="journal article" date="2008" name="DNA Res.">
        <title>Determination of the genome sequence of Porphyromonas gingivalis strain ATCC 33277 and genomic comparison with strain W83 revealed extensive genome rearrangements in P. gingivalis.</title>
        <authorList>
            <person name="Naito M."/>
            <person name="Hirakawa H."/>
            <person name="Yamashita A."/>
            <person name="Ohara N."/>
            <person name="Shoji M."/>
            <person name="Yukitake H."/>
            <person name="Nakayama K."/>
            <person name="Toh H."/>
            <person name="Yoshimura F."/>
            <person name="Kuhara S."/>
            <person name="Hattori M."/>
            <person name="Hayashi T."/>
            <person name="Nakayama K."/>
        </authorList>
    </citation>
    <scope>NUCLEOTIDE SEQUENCE [LARGE SCALE GENOMIC DNA]</scope>
    <source>
        <strain>ATCC 33277 / DSM 20709 / CIP 103683 / JCM 12257 / NCTC 11834 / 2561</strain>
    </source>
</reference>
<comment type="function">
    <text evidence="1">IF-3 binds to the 30S ribosomal subunit and shifts the equilibrium between 70S ribosomes and their 50S and 30S subunits in favor of the free subunits, thus enhancing the availability of 30S subunits on which protein synthesis initiation begins.</text>
</comment>
<comment type="subunit">
    <text evidence="1">Monomer.</text>
</comment>
<comment type="subcellular location">
    <subcellularLocation>
        <location evidence="1">Cytoplasm</location>
    </subcellularLocation>
</comment>
<comment type="similarity">
    <text evidence="1">Belongs to the IF-3 family.</text>
</comment>
<keyword id="KW-0963">Cytoplasm</keyword>
<keyword id="KW-0396">Initiation factor</keyword>
<keyword id="KW-0648">Protein biosynthesis</keyword>
<gene>
    <name evidence="1" type="primary">infC</name>
    <name type="ordered locus">PGN_0963</name>
</gene>
<accession>B2RJD7</accession>